<feature type="chain" id="PRO_0000154567" description="Interferon regulatory factor 9">
    <location>
        <begin position="1"/>
        <end position="393"/>
    </location>
</feature>
<feature type="DNA-binding region" description="IRF tryptophan pentad repeat" evidence="2">
    <location>
        <begin position="9"/>
        <end position="116"/>
    </location>
</feature>
<feature type="region of interest" description="Disordered" evidence="3">
    <location>
        <begin position="120"/>
        <end position="151"/>
    </location>
</feature>
<feature type="region of interest" description="Disordered" evidence="3">
    <location>
        <begin position="163"/>
        <end position="202"/>
    </location>
</feature>
<feature type="modified residue" description="Phosphoserine" evidence="1">
    <location>
        <position position="139"/>
    </location>
</feature>
<feature type="sequence variant" id="VAR_083496" description="Does not affect transcriptional activation in response to type I interferon stimulation; does not affect anti-viral immunity; dbSNP:rs145480303." evidence="5">
    <original>Q</original>
    <variation>H</variation>
    <location>
        <position position="127"/>
    </location>
</feature>
<feature type="sequence variant" id="VAR_083497" description="Decreased transcriptional activation in response to type I interferon stimulation; dbSNP:rs1452927917." evidence="5">
    <original>R</original>
    <variation>C</variation>
    <location>
        <position position="292"/>
    </location>
</feature>
<feature type="mutagenesis site" description="Loss of transcriptional activation in response to type I interferon stimulation. Impaired anti-viral immunity." evidence="5">
    <original>K</original>
    <variation>R</variation>
    <location>
        <position position="81"/>
    </location>
</feature>
<feature type="mutagenesis site" description="Decreased transcriptional activation in response to type I interferon stimulation. Decreased anti-viral immunity." evidence="5">
    <original>R</original>
    <variation>Q</variation>
    <location>
        <position position="292"/>
    </location>
</feature>
<accession>Q00978</accession>
<accession>D3DS61</accession>
<organism>
    <name type="scientific">Homo sapiens</name>
    <name type="common">Human</name>
    <dbReference type="NCBI Taxonomy" id="9606"/>
    <lineage>
        <taxon>Eukaryota</taxon>
        <taxon>Metazoa</taxon>
        <taxon>Chordata</taxon>
        <taxon>Craniata</taxon>
        <taxon>Vertebrata</taxon>
        <taxon>Euteleostomi</taxon>
        <taxon>Mammalia</taxon>
        <taxon>Eutheria</taxon>
        <taxon>Euarchontoglires</taxon>
        <taxon>Primates</taxon>
        <taxon>Haplorrhini</taxon>
        <taxon>Catarrhini</taxon>
        <taxon>Hominidae</taxon>
        <taxon>Homo</taxon>
    </lineage>
</organism>
<protein>
    <recommendedName>
        <fullName>Interferon regulatory factor 9</fullName>
        <shortName>IRF-9</shortName>
    </recommendedName>
    <alternativeName>
        <fullName>IFN-alpha-responsive transcription factor subunit</fullName>
    </alternativeName>
    <alternativeName>
        <fullName>ISGF3 p48 subunit</fullName>
    </alternativeName>
    <alternativeName>
        <fullName>Interferon-stimulated gene factor 3 gamma</fullName>
        <shortName>ISGF-3 gamma</shortName>
    </alternativeName>
    <alternativeName>
        <fullName>Transcriptional regulator ISGF3 subunit gamma</fullName>
    </alternativeName>
</protein>
<dbReference type="EMBL" id="M87503">
    <property type="protein sequence ID" value="AAA58687.1"/>
    <property type="molecule type" value="mRNA"/>
</dbReference>
<dbReference type="EMBL" id="CH471078">
    <property type="protein sequence ID" value="EAW66093.1"/>
    <property type="molecule type" value="Genomic_DNA"/>
</dbReference>
<dbReference type="EMBL" id="CH471078">
    <property type="protein sequence ID" value="EAW66094.1"/>
    <property type="molecule type" value="Genomic_DNA"/>
</dbReference>
<dbReference type="EMBL" id="BC035716">
    <property type="protein sequence ID" value="AAH35716.1"/>
    <property type="molecule type" value="mRNA"/>
</dbReference>
<dbReference type="CCDS" id="CCDS9615.1"/>
<dbReference type="PIR" id="A45017">
    <property type="entry name" value="A45017"/>
</dbReference>
<dbReference type="RefSeq" id="NP_006075.3">
    <property type="nucleotide sequence ID" value="NM_006084.4"/>
</dbReference>
<dbReference type="SMR" id="Q00978"/>
<dbReference type="BioGRID" id="115652">
    <property type="interactions" value="41"/>
</dbReference>
<dbReference type="ComplexPortal" id="CPX-6016">
    <property type="entry name" value="ISGF3 complex"/>
</dbReference>
<dbReference type="CORUM" id="Q00978"/>
<dbReference type="FunCoup" id="Q00978">
    <property type="interactions" value="1246"/>
</dbReference>
<dbReference type="IntAct" id="Q00978">
    <property type="interactions" value="30"/>
</dbReference>
<dbReference type="MINT" id="Q00978"/>
<dbReference type="STRING" id="9606.ENSP00000380073"/>
<dbReference type="iPTMnet" id="Q00978"/>
<dbReference type="PhosphoSitePlus" id="Q00978"/>
<dbReference type="BioMuta" id="IRF9"/>
<dbReference type="DMDM" id="266392"/>
<dbReference type="jPOST" id="Q00978"/>
<dbReference type="MassIVE" id="Q00978"/>
<dbReference type="PaxDb" id="9606-ENSP00000380073"/>
<dbReference type="PeptideAtlas" id="Q00978"/>
<dbReference type="ProteomicsDB" id="57888"/>
<dbReference type="Pumba" id="Q00978"/>
<dbReference type="Antibodypedia" id="663">
    <property type="antibodies" value="289 antibodies from 34 providers"/>
</dbReference>
<dbReference type="DNASU" id="10379"/>
<dbReference type="Ensembl" id="ENST00000396864.8">
    <property type="protein sequence ID" value="ENSP00000380073.3"/>
    <property type="gene ID" value="ENSG00000213928.10"/>
</dbReference>
<dbReference type="Ensembl" id="ENST00000646071.2">
    <property type="protein sequence ID" value="ENSP00000494792.1"/>
    <property type="gene ID" value="ENSG00000285048.2"/>
</dbReference>
<dbReference type="Ensembl" id="ENST00000699071.1">
    <property type="protein sequence ID" value="ENSP00000514112.1"/>
    <property type="gene ID" value="ENSG00000213928.10"/>
</dbReference>
<dbReference type="GeneID" id="10379"/>
<dbReference type="KEGG" id="hsa:10379"/>
<dbReference type="MANE-Select" id="ENST00000396864.8">
    <property type="protein sequence ID" value="ENSP00000380073.3"/>
    <property type="RefSeq nucleotide sequence ID" value="NM_006084.5"/>
    <property type="RefSeq protein sequence ID" value="NP_006075.3"/>
</dbReference>
<dbReference type="UCSC" id="uc058zzb.1">
    <property type="organism name" value="human"/>
</dbReference>
<dbReference type="AGR" id="HGNC:6131"/>
<dbReference type="CTD" id="10379"/>
<dbReference type="DisGeNET" id="10379"/>
<dbReference type="GeneCards" id="IRF9"/>
<dbReference type="HGNC" id="HGNC:6131">
    <property type="gene designation" value="IRF9"/>
</dbReference>
<dbReference type="HPA" id="ENSG00000213928">
    <property type="expression patterns" value="Low tissue specificity"/>
</dbReference>
<dbReference type="MalaCards" id="IRF9"/>
<dbReference type="MIM" id="147574">
    <property type="type" value="gene"/>
</dbReference>
<dbReference type="MIM" id="618648">
    <property type="type" value="phenotype"/>
</dbReference>
<dbReference type="neXtProt" id="NX_Q00978"/>
<dbReference type="OpenTargets" id="ENSG00000213928"/>
<dbReference type="PharmGKB" id="PA162392259"/>
<dbReference type="VEuPathDB" id="HostDB:ENSG00000213928"/>
<dbReference type="eggNOG" id="ENOG502RR4E">
    <property type="taxonomic scope" value="Eukaryota"/>
</dbReference>
<dbReference type="GeneTree" id="ENSGT00940000162115"/>
<dbReference type="HOGENOM" id="CLU_031544_1_2_1"/>
<dbReference type="InParanoid" id="Q00978"/>
<dbReference type="OMA" id="NFWEESC"/>
<dbReference type="OrthoDB" id="5958224at2759"/>
<dbReference type="PAN-GO" id="Q00978">
    <property type="GO annotations" value="5 GO annotations based on evolutionary models"/>
</dbReference>
<dbReference type="PhylomeDB" id="Q00978"/>
<dbReference type="TreeFam" id="TF328512"/>
<dbReference type="PathwayCommons" id="Q00978"/>
<dbReference type="Reactome" id="R-HSA-877300">
    <property type="pathway name" value="Interferon gamma signaling"/>
</dbReference>
<dbReference type="Reactome" id="R-HSA-909733">
    <property type="pathway name" value="Interferon alpha/beta signaling"/>
</dbReference>
<dbReference type="SignaLink" id="Q00978"/>
<dbReference type="SIGNOR" id="Q00978"/>
<dbReference type="BioGRID-ORCS" id="10379">
    <property type="hits" value="24 hits in 1190 CRISPR screens"/>
</dbReference>
<dbReference type="ChiTaRS" id="IRF9">
    <property type="organism name" value="human"/>
</dbReference>
<dbReference type="GeneWiki" id="IRF9"/>
<dbReference type="GeneWiki" id="ISGF3G"/>
<dbReference type="GenomeRNAi" id="10379"/>
<dbReference type="Pharos" id="Q00978">
    <property type="development level" value="Tbio"/>
</dbReference>
<dbReference type="PRO" id="PR:Q00978"/>
<dbReference type="Proteomes" id="UP000005640">
    <property type="component" value="Chromosome 14"/>
</dbReference>
<dbReference type="RNAct" id="Q00978">
    <property type="molecule type" value="protein"/>
</dbReference>
<dbReference type="Bgee" id="ENSG00000213928">
    <property type="expression patterns" value="Expressed in spleen and 99 other cell types or tissues"/>
</dbReference>
<dbReference type="ExpressionAtlas" id="Q00978">
    <property type="expression patterns" value="baseline and differential"/>
</dbReference>
<dbReference type="GO" id="GO:0000785">
    <property type="term" value="C:chromatin"/>
    <property type="evidence" value="ECO:0000247"/>
    <property type="project" value="NTNU_SB"/>
</dbReference>
<dbReference type="GO" id="GO:0005737">
    <property type="term" value="C:cytoplasm"/>
    <property type="evidence" value="ECO:0000304"/>
    <property type="project" value="ProtInc"/>
</dbReference>
<dbReference type="GO" id="GO:0005829">
    <property type="term" value="C:cytosol"/>
    <property type="evidence" value="ECO:0000314"/>
    <property type="project" value="HPA"/>
</dbReference>
<dbReference type="GO" id="GO:0070721">
    <property type="term" value="C:ISGF3 complex"/>
    <property type="evidence" value="ECO:0000353"/>
    <property type="project" value="ComplexPortal"/>
</dbReference>
<dbReference type="GO" id="GO:0005654">
    <property type="term" value="C:nucleoplasm"/>
    <property type="evidence" value="ECO:0000304"/>
    <property type="project" value="Reactome"/>
</dbReference>
<dbReference type="GO" id="GO:0005634">
    <property type="term" value="C:nucleus"/>
    <property type="evidence" value="ECO:0000318"/>
    <property type="project" value="GO_Central"/>
</dbReference>
<dbReference type="GO" id="GO:0003700">
    <property type="term" value="F:DNA-binding transcription factor activity"/>
    <property type="evidence" value="ECO:0000304"/>
    <property type="project" value="ProtInc"/>
</dbReference>
<dbReference type="GO" id="GO:0000981">
    <property type="term" value="F:DNA-binding transcription factor activity, RNA polymerase II-specific"/>
    <property type="evidence" value="ECO:0000247"/>
    <property type="project" value="NTNU_SB"/>
</dbReference>
<dbReference type="GO" id="GO:0000978">
    <property type="term" value="F:RNA polymerase II cis-regulatory region sequence-specific DNA binding"/>
    <property type="evidence" value="ECO:0000315"/>
    <property type="project" value="UniProtKB"/>
</dbReference>
<dbReference type="GO" id="GO:1990837">
    <property type="term" value="F:sequence-specific double-stranded DNA binding"/>
    <property type="evidence" value="ECO:0000314"/>
    <property type="project" value="ARUK-UCL"/>
</dbReference>
<dbReference type="GO" id="GO:0007166">
    <property type="term" value="P:cell surface receptor signaling pathway"/>
    <property type="evidence" value="ECO:0000304"/>
    <property type="project" value="ProtInc"/>
</dbReference>
<dbReference type="GO" id="GO:0051607">
    <property type="term" value="P:defense response to virus"/>
    <property type="evidence" value="ECO:0007669"/>
    <property type="project" value="UniProtKB-KW"/>
</dbReference>
<dbReference type="GO" id="GO:0002376">
    <property type="term" value="P:immune system process"/>
    <property type="evidence" value="ECO:0000318"/>
    <property type="project" value="GO_Central"/>
</dbReference>
<dbReference type="GO" id="GO:0045944">
    <property type="term" value="P:positive regulation of transcription by RNA polymerase II"/>
    <property type="evidence" value="ECO:0000314"/>
    <property type="project" value="ComplexPortal"/>
</dbReference>
<dbReference type="GO" id="GO:0006357">
    <property type="term" value="P:regulation of transcription by RNA polymerase II"/>
    <property type="evidence" value="ECO:0000318"/>
    <property type="project" value="GO_Central"/>
</dbReference>
<dbReference type="GO" id="GO:0006366">
    <property type="term" value="P:transcription by RNA polymerase II"/>
    <property type="evidence" value="ECO:0000304"/>
    <property type="project" value="ProtInc"/>
</dbReference>
<dbReference type="CDD" id="cd00103">
    <property type="entry name" value="IRF"/>
    <property type="match status" value="1"/>
</dbReference>
<dbReference type="FunFam" id="1.10.10.10:FF:000041">
    <property type="entry name" value="Interferon regulatory factor 4"/>
    <property type="match status" value="1"/>
</dbReference>
<dbReference type="FunFam" id="2.60.200.10:FF:000009">
    <property type="entry name" value="interferon regulatory factor 9 isoform X1"/>
    <property type="match status" value="1"/>
</dbReference>
<dbReference type="Gene3D" id="2.60.200.10">
    <property type="match status" value="1"/>
</dbReference>
<dbReference type="Gene3D" id="1.10.10.10">
    <property type="entry name" value="Winged helix-like DNA-binding domain superfamily/Winged helix DNA-binding domain"/>
    <property type="match status" value="1"/>
</dbReference>
<dbReference type="InterPro" id="IPR019817">
    <property type="entry name" value="Interferon_reg_fac_CS"/>
</dbReference>
<dbReference type="InterPro" id="IPR001346">
    <property type="entry name" value="Interferon_reg_fact_DNA-bd_dom"/>
</dbReference>
<dbReference type="InterPro" id="IPR019471">
    <property type="entry name" value="Interferon_reg_factor-3"/>
</dbReference>
<dbReference type="InterPro" id="IPR017855">
    <property type="entry name" value="SMAD-like_dom_sf"/>
</dbReference>
<dbReference type="InterPro" id="IPR008984">
    <property type="entry name" value="SMAD_FHA_dom_sf"/>
</dbReference>
<dbReference type="InterPro" id="IPR036388">
    <property type="entry name" value="WH-like_DNA-bd_sf"/>
</dbReference>
<dbReference type="InterPro" id="IPR036390">
    <property type="entry name" value="WH_DNA-bd_sf"/>
</dbReference>
<dbReference type="PANTHER" id="PTHR11949">
    <property type="entry name" value="INTERFERON REGULATORY FACTOR"/>
    <property type="match status" value="1"/>
</dbReference>
<dbReference type="PANTHER" id="PTHR11949:SF26">
    <property type="entry name" value="INTERFERON REGULATORY FACTOR 9"/>
    <property type="match status" value="1"/>
</dbReference>
<dbReference type="Pfam" id="PF00605">
    <property type="entry name" value="IRF"/>
    <property type="match status" value="1"/>
</dbReference>
<dbReference type="Pfam" id="PF10401">
    <property type="entry name" value="IRF-3"/>
    <property type="match status" value="1"/>
</dbReference>
<dbReference type="PRINTS" id="PR00267">
    <property type="entry name" value="INTFRNREGFCT"/>
</dbReference>
<dbReference type="SMART" id="SM00348">
    <property type="entry name" value="IRF"/>
    <property type="match status" value="1"/>
</dbReference>
<dbReference type="SMART" id="SM01243">
    <property type="entry name" value="IRF-3"/>
    <property type="match status" value="1"/>
</dbReference>
<dbReference type="SUPFAM" id="SSF49879">
    <property type="entry name" value="SMAD/FHA domain"/>
    <property type="match status" value="1"/>
</dbReference>
<dbReference type="SUPFAM" id="SSF46785">
    <property type="entry name" value="Winged helix' DNA-binding domain"/>
    <property type="match status" value="1"/>
</dbReference>
<dbReference type="PROSITE" id="PS00601">
    <property type="entry name" value="IRF_1"/>
    <property type="match status" value="1"/>
</dbReference>
<dbReference type="PROSITE" id="PS51507">
    <property type="entry name" value="IRF_2"/>
    <property type="match status" value="1"/>
</dbReference>
<comment type="function">
    <text evidence="5">Transcription factor that plays an essential role in anti-viral immunity. It mediates signaling by type I IFNs (IFN-alpha and IFN-beta). Following type I IFN binding to cell surface receptors, Jak kinases (TYK2 and JAK1) are activated, leading to tyrosine phosphorylation of STAT1 and STAT2. IRF9/ISGF3G associates with the phosphorylated STAT1:STAT2 dimer to form a complex termed ISGF3 transcription factor, that enters the nucleus. ISGF3 binds to the IFN stimulated response element (ISRE) to activate the transcription of interferon stimulated genes, which drive the cell in an antiviral state.</text>
</comment>
<comment type="subunit">
    <text>Interacts with STAT2 in the cytoplasm. Forms the interferon-stimulated gene factor 3 complex (ISGF3) with the heterodimer STAT1:STAT2; upon stimulation.</text>
</comment>
<comment type="subunit">
    <text evidence="7">(Microbial infection) Interacts with measles virus V protein; this interaction prevents the binding of IRF9 to STAT2 and thereby the type I interferon signaling pathway.</text>
</comment>
<comment type="interaction">
    <interactant intactId="EBI-626526">
        <id>Q00978</id>
    </interactant>
    <interactant intactId="EBI-958408">
        <id>P48551</id>
        <label>IFNAR2</label>
    </interactant>
    <organismsDiffer>false</organismsDiffer>
    <experiments>6</experiments>
</comment>
<comment type="interaction">
    <interactant intactId="EBI-626526">
        <id>Q00978</id>
    </interactant>
    <interactant intactId="EBI-1546963">
        <id>P52630</id>
        <label>STAT2</label>
    </interactant>
    <organismsDiffer>false</organismsDiffer>
    <experiments>10</experiments>
</comment>
<comment type="subcellular location">
    <subcellularLocation>
        <location evidence="4">Cytoplasm</location>
    </subcellularLocation>
    <subcellularLocation>
        <location evidence="4 5">Nucleus</location>
    </subcellularLocation>
    <text>Translocated into the nucleus upon activation by IFN-alpha/beta.</text>
</comment>
<comment type="induction">
    <text>By IFN-alpha and IFNB1/IFN-beta.</text>
</comment>
<comment type="PTM">
    <text evidence="8">(Microbial infection) Ubiquitinated by Herpes simplex virus 2 E3 ubiquitin ligase ICP22.</text>
</comment>
<comment type="disease" evidence="5 6">
    <disease id="DI-05684">
        <name>Immunodeficiency 65</name>
        <acronym>IMD65</acronym>
        <description>An autosomal recessive immunologic disorder characterized by recurrent viral infections from early infancy. Clinical consequences are pneumonia, bronchiectasis, and septic shock. Affected individuals have lymphopenia or hypogammaglobulinemia, particularly during infection, and impaired cellular type I interferon response. Patients may have adverse response to vaccination with live attenuated vaccines.</description>
        <dbReference type="MIM" id="618648"/>
    </disease>
    <text>The disease is caused by variants affecting the gene represented in this entry.</text>
</comment>
<comment type="similarity">
    <text evidence="2">Belongs to the IRF family.</text>
</comment>
<gene>
    <name type="primary">IRF9</name>
    <name type="synonym">ISGF3G</name>
</gene>
<name>IRF9_HUMAN</name>
<reference key="1">
    <citation type="journal article" date="1992" name="Mol. Cell. Biol.">
        <title>Subunit of an alpha-interferon-responsive transcription factor is related to interferon regulatory factor and Myb families of DNA-binding proteins.</title>
        <authorList>
            <person name="Veals S.A."/>
            <person name="Schindler C."/>
            <person name="Leonard D.G.B."/>
            <person name="Fu X.-Y."/>
            <person name="Aebersold R.H."/>
            <person name="Darnell J.E. Jr."/>
            <person name="Levy D.E."/>
        </authorList>
    </citation>
    <scope>NUCLEOTIDE SEQUENCE [MRNA]</scope>
    <scope>PARTIAL PROTEIN SEQUENCE</scope>
</reference>
<reference key="2">
    <citation type="submission" date="2005-09" db="EMBL/GenBank/DDBJ databases">
        <authorList>
            <person name="Mural R.J."/>
            <person name="Istrail S."/>
            <person name="Sutton G.G."/>
            <person name="Florea L."/>
            <person name="Halpern A.L."/>
            <person name="Mobarry C.M."/>
            <person name="Lippert R."/>
            <person name="Walenz B."/>
            <person name="Shatkay H."/>
            <person name="Dew I."/>
            <person name="Miller J.R."/>
            <person name="Flanigan M.J."/>
            <person name="Edwards N.J."/>
            <person name="Bolanos R."/>
            <person name="Fasulo D."/>
            <person name="Halldorsson B.V."/>
            <person name="Hannenhalli S."/>
            <person name="Turner R."/>
            <person name="Yooseph S."/>
            <person name="Lu F."/>
            <person name="Nusskern D.R."/>
            <person name="Shue B.C."/>
            <person name="Zheng X.H."/>
            <person name="Zhong F."/>
            <person name="Delcher A.L."/>
            <person name="Huson D.H."/>
            <person name="Kravitz S.A."/>
            <person name="Mouchard L."/>
            <person name="Reinert K."/>
            <person name="Remington K.A."/>
            <person name="Clark A.G."/>
            <person name="Waterman M.S."/>
            <person name="Eichler E.E."/>
            <person name="Adams M.D."/>
            <person name="Hunkapiller M.W."/>
            <person name="Myers E.W."/>
            <person name="Venter J.C."/>
        </authorList>
    </citation>
    <scope>NUCLEOTIDE SEQUENCE [LARGE SCALE GENOMIC DNA]</scope>
</reference>
<reference key="3">
    <citation type="journal article" date="2004" name="Genome Res.">
        <title>The status, quality, and expansion of the NIH full-length cDNA project: the Mammalian Gene Collection (MGC).</title>
        <authorList>
            <consortium name="The MGC Project Team"/>
        </authorList>
    </citation>
    <scope>NUCLEOTIDE SEQUENCE [LARGE SCALE MRNA]</scope>
    <source>
        <tissue>Ovary</tissue>
    </source>
</reference>
<reference key="4">
    <citation type="journal article" date="2002" name="J. Interferon Cytokine Res.">
        <title>Nuclear/cytoplasmic localization of IRFs in response to viral infection or interferon stimulation.</title>
        <authorList>
            <person name="Reich N.C."/>
        </authorList>
    </citation>
    <scope>SUBCELLULAR LOCATION</scope>
</reference>
<reference key="5">
    <citation type="journal article" date="1999" name="Intervirology">
        <title>Viral inhibition of interferon signal transduction.</title>
        <authorList>
            <person name="Cebulla C.M."/>
            <person name="Miller D.M."/>
            <person name="Sedmak D.D."/>
        </authorList>
    </citation>
    <scope>REVIEW</scope>
</reference>
<reference key="6">
    <citation type="journal article" date="2018" name="J. Exp. Med.">
        <title>Life-threatening influenza pneumonitis in a child with inherited IRF9 deficiency.</title>
        <authorList>
            <person name="Hernandez N."/>
            <person name="Melki I."/>
            <person name="Jing H."/>
            <person name="Habib T."/>
            <person name="Huang S.S.Y."/>
            <person name="Danielson J."/>
            <person name="Kula T."/>
            <person name="Drutman S."/>
            <person name="Belkaya S."/>
            <person name="Rattina V."/>
            <person name="Lorenzo-Diaz L."/>
            <person name="Boulai A."/>
            <person name="Rose Y."/>
            <person name="Kitabayashi N."/>
            <person name="Rodero M.P."/>
            <person name="Dumaine C."/>
            <person name="Blanche S."/>
            <person name="Lebras M.N."/>
            <person name="Leung M.C."/>
            <person name="Mathew L.S."/>
            <person name="Boisson B."/>
            <person name="Zhang S.Y."/>
            <person name="Boisson-Dupuis S."/>
            <person name="Giliani S."/>
            <person name="Chaussabel D."/>
            <person name="Notarangelo L.D."/>
            <person name="Elledge S.J."/>
            <person name="Ciancanelli M.J."/>
            <person name="Abel L."/>
            <person name="Zhang Q."/>
            <person name="Marr N."/>
            <person name="Crow Y.J."/>
            <person name="Su H.C."/>
            <person name="Casanova J.L."/>
        </authorList>
    </citation>
    <scope>FUNCTION</scope>
    <scope>SUBCELLULAR LOCATION</scope>
    <scope>INVOLVEMENT IN IMD65</scope>
    <scope>VARIANTS HIS-127 AND CYS-292</scope>
    <scope>CHARACTERIZATION OF VARIANTS HIS-127 AND CYS-292</scope>
    <scope>MUTAGENESIS OF LYS-81 AND ARG-292</scope>
</reference>
<reference key="7">
    <citation type="journal article" date="2019" name="J. Allergy Clin. Immunol.">
        <title>Impaired control of multiple viral infections in a family with complete IRF9 deficiency.</title>
        <authorList>
            <person name="Bravo Garcia-Morato M."/>
            <person name="Calvo Apalategi A."/>
            <person name="Bravo-Gallego L.Y."/>
            <person name="Blazquez Moreno A."/>
            <person name="Simon-Fuentes M."/>
            <person name="Garmendia J.V."/>
            <person name="Mendez Echevarria A."/>
            <person name="Del Rosal Rabes T."/>
            <person name="Dominguez-Soto A."/>
            <person name="Lopez-Granados E."/>
            <person name="Reyburn H.T."/>
            <person name="Rodriguez Pena R."/>
        </authorList>
    </citation>
    <scope>FUNCTION</scope>
    <scope>INVOLVEMENT IN IMD65</scope>
</reference>
<reference key="8">
    <citation type="journal article" date="2020" name="J. Immunol.">
        <title>Herpes Simplex Virus Type 2 Inhibits Type I IFN Signaling Mediated by the Novel E3 Ubiquitin Protein Ligase Activity of Viral Protein ICP22.</title>
        <authorList>
            <person name="Zhang M."/>
            <person name="Fu M."/>
            <person name="Li M."/>
            <person name="Hu H."/>
            <person name="Gong S."/>
            <person name="Hu Q."/>
        </authorList>
    </citation>
    <scope>UBIQUITINATION BY HERPES SIMPLEX VIRUS 2 PROTEIN ICP22 (MICROBIAL INFECTION)</scope>
</reference>
<reference key="9">
    <citation type="journal article" date="2020" name="J. Virol.">
        <title>The Measles Virus V Protein Binding Site to STAT2 Overlaps That of IRF9.</title>
        <authorList>
            <person name="Nagano Y."/>
            <person name="Sugiyama A."/>
            <person name="Kimoto M."/>
            <person name="Wakahara T."/>
            <person name="Noguchi Y."/>
            <person name="Jiang X."/>
            <person name="Saijo S."/>
            <person name="Shimizu N."/>
            <person name="Yabuno N."/>
            <person name="Yao M."/>
            <person name="Gooley P.R."/>
            <person name="Moseley G.W."/>
            <person name="Tadokoro T."/>
            <person name="Maenaka K."/>
            <person name="Ose T."/>
        </authorList>
    </citation>
    <scope>INTERACTION WITH MEASLES VIRUS V PROTEIN (MICROBIAL INFECTION)</scope>
</reference>
<evidence type="ECO:0000250" key="1">
    <source>
        <dbReference type="UniProtKB" id="Q61179"/>
    </source>
</evidence>
<evidence type="ECO:0000255" key="2">
    <source>
        <dbReference type="PROSITE-ProRule" id="PRU00840"/>
    </source>
</evidence>
<evidence type="ECO:0000256" key="3">
    <source>
        <dbReference type="SAM" id="MobiDB-lite"/>
    </source>
</evidence>
<evidence type="ECO:0000269" key="4">
    <source>
    </source>
</evidence>
<evidence type="ECO:0000269" key="5">
    <source>
    </source>
</evidence>
<evidence type="ECO:0000269" key="6">
    <source>
    </source>
</evidence>
<evidence type="ECO:0000269" key="7">
    <source>
    </source>
</evidence>
<evidence type="ECO:0000269" key="8">
    <source>
    </source>
</evidence>
<sequence length="393" mass="43696">MASGRARCTRKLRNWVVEQVESGQFPGVCWDDTAKTMFRIPWKHAGKQDFREDQDAAFFKAWAIFKGKYKEGDTGGPAVWKTRLRCALNKSSEFKEVPERGRMDVAEPYKVYQLLPPGIVSGQPGTQKVPSKRQHSSVSSERKEEEDAMQNCTLSPSVLQDSLNNEEEGASGGAVHSDIGSSSSSSSPEPQEVTDTTEAPFQGDQRSLEFLLPPEPDYSLLLTFIYNGRVVGEAQVQSLDCRLVAEPSGSESSMEQVLFPKPGPLEPTQRLLSQLERGILVASNPRGLFVQRLCPIPISWNAPQAPPGPGPHLLPSNECVELFRTAYFCRDLVRYFQGLGPPPKFQVTLNFWEESHGSSHTPQNLITVKMEQAFARYLLEQTPEQQAAILSLV</sequence>
<proteinExistence type="evidence at protein level"/>
<keyword id="KW-0010">Activator</keyword>
<keyword id="KW-0051">Antiviral defense</keyword>
<keyword id="KW-0963">Cytoplasm</keyword>
<keyword id="KW-0903">Direct protein sequencing</keyword>
<keyword id="KW-0238">DNA-binding</keyword>
<keyword id="KW-0539">Nucleus</keyword>
<keyword id="KW-0597">Phosphoprotein</keyword>
<keyword id="KW-1267">Proteomics identification</keyword>
<keyword id="KW-1185">Reference proteome</keyword>
<keyword id="KW-0804">Transcription</keyword>
<keyword id="KW-0805">Transcription regulation</keyword>
<keyword id="KW-0832">Ubl conjugation</keyword>